<name>EFTU_RHOBA</name>
<protein>
    <recommendedName>
        <fullName evidence="2">Elongation factor Tu</fullName>
        <shortName evidence="2">EF-Tu</shortName>
        <ecNumber evidence="2">3.6.5.3</ecNumber>
    </recommendedName>
</protein>
<reference key="1">
    <citation type="journal article" date="2003" name="Proc. Natl. Acad. Sci. U.S.A.">
        <title>Complete genome sequence of the marine planctomycete Pirellula sp. strain 1.</title>
        <authorList>
            <person name="Gloeckner F.O."/>
            <person name="Kube M."/>
            <person name="Bauer M."/>
            <person name="Teeling H."/>
            <person name="Lombardot T."/>
            <person name="Ludwig W."/>
            <person name="Gade D."/>
            <person name="Beck A."/>
            <person name="Borzym K."/>
            <person name="Heitmann K."/>
            <person name="Rabus R."/>
            <person name="Schlesner H."/>
            <person name="Amann R."/>
            <person name="Reinhardt R."/>
        </authorList>
    </citation>
    <scope>NUCLEOTIDE SEQUENCE [LARGE SCALE GENOMIC DNA]</scope>
    <source>
        <strain>DSM 10527 / NCIMB 13988 / SH1</strain>
    </source>
</reference>
<keyword id="KW-0963">Cytoplasm</keyword>
<keyword id="KW-0251">Elongation factor</keyword>
<keyword id="KW-0342">GTP-binding</keyword>
<keyword id="KW-0378">Hydrolase</keyword>
<keyword id="KW-0460">Magnesium</keyword>
<keyword id="KW-0479">Metal-binding</keyword>
<keyword id="KW-0547">Nucleotide-binding</keyword>
<keyword id="KW-0648">Protein biosynthesis</keyword>
<keyword id="KW-1185">Reference proteome</keyword>
<organism>
    <name type="scientific">Rhodopirellula baltica (strain DSM 10527 / NCIMB 13988 / SH1)</name>
    <dbReference type="NCBI Taxonomy" id="243090"/>
    <lineage>
        <taxon>Bacteria</taxon>
        <taxon>Pseudomonadati</taxon>
        <taxon>Planctomycetota</taxon>
        <taxon>Planctomycetia</taxon>
        <taxon>Pirellulales</taxon>
        <taxon>Pirellulaceae</taxon>
        <taxon>Rhodopirellula</taxon>
    </lineage>
</organism>
<gene>
    <name evidence="2" type="primary">tuf</name>
    <name type="ordered locus">RB7894</name>
</gene>
<evidence type="ECO:0000250" key="1"/>
<evidence type="ECO:0000255" key="2">
    <source>
        <dbReference type="HAMAP-Rule" id="MF_00118"/>
    </source>
</evidence>
<dbReference type="EC" id="3.6.5.3" evidence="2"/>
<dbReference type="EMBL" id="BX294146">
    <property type="protein sequence ID" value="CAD75633.1"/>
    <property type="molecule type" value="Genomic_DNA"/>
</dbReference>
<dbReference type="RefSeq" id="NP_868082.1">
    <property type="nucleotide sequence ID" value="NC_005027.1"/>
</dbReference>
<dbReference type="RefSeq" id="WP_011121621.1">
    <property type="nucleotide sequence ID" value="NC_005027.1"/>
</dbReference>
<dbReference type="SMR" id="Q7UMZ0"/>
<dbReference type="FunCoup" id="Q7UMZ0">
    <property type="interactions" value="596"/>
</dbReference>
<dbReference type="STRING" id="243090.RB7894"/>
<dbReference type="EnsemblBacteria" id="CAD75633">
    <property type="protein sequence ID" value="CAD75633"/>
    <property type="gene ID" value="RB7894"/>
</dbReference>
<dbReference type="KEGG" id="rba:RB7894"/>
<dbReference type="PATRIC" id="fig|243090.15.peg.3816"/>
<dbReference type="eggNOG" id="COG0050">
    <property type="taxonomic scope" value="Bacteria"/>
</dbReference>
<dbReference type="HOGENOM" id="CLU_007265_0_1_0"/>
<dbReference type="InParanoid" id="Q7UMZ0"/>
<dbReference type="OrthoDB" id="9804504at2"/>
<dbReference type="Proteomes" id="UP000001025">
    <property type="component" value="Chromosome"/>
</dbReference>
<dbReference type="GO" id="GO:0005737">
    <property type="term" value="C:cytoplasm"/>
    <property type="evidence" value="ECO:0007669"/>
    <property type="project" value="UniProtKB-SubCell"/>
</dbReference>
<dbReference type="GO" id="GO:0005525">
    <property type="term" value="F:GTP binding"/>
    <property type="evidence" value="ECO:0007669"/>
    <property type="project" value="UniProtKB-UniRule"/>
</dbReference>
<dbReference type="GO" id="GO:0003924">
    <property type="term" value="F:GTPase activity"/>
    <property type="evidence" value="ECO:0007669"/>
    <property type="project" value="InterPro"/>
</dbReference>
<dbReference type="GO" id="GO:0003746">
    <property type="term" value="F:translation elongation factor activity"/>
    <property type="evidence" value="ECO:0000318"/>
    <property type="project" value="GO_Central"/>
</dbReference>
<dbReference type="GO" id="GO:0006414">
    <property type="term" value="P:translational elongation"/>
    <property type="evidence" value="ECO:0000318"/>
    <property type="project" value="GO_Central"/>
</dbReference>
<dbReference type="CDD" id="cd01884">
    <property type="entry name" value="EF_Tu"/>
    <property type="match status" value="1"/>
</dbReference>
<dbReference type="CDD" id="cd03697">
    <property type="entry name" value="EFTU_II"/>
    <property type="match status" value="1"/>
</dbReference>
<dbReference type="CDD" id="cd03707">
    <property type="entry name" value="EFTU_III"/>
    <property type="match status" value="1"/>
</dbReference>
<dbReference type="FunFam" id="2.40.30.10:FF:000001">
    <property type="entry name" value="Elongation factor Tu"/>
    <property type="match status" value="1"/>
</dbReference>
<dbReference type="FunFam" id="3.40.50.300:FF:000003">
    <property type="entry name" value="Elongation factor Tu"/>
    <property type="match status" value="1"/>
</dbReference>
<dbReference type="Gene3D" id="3.40.50.300">
    <property type="entry name" value="P-loop containing nucleotide triphosphate hydrolases"/>
    <property type="match status" value="1"/>
</dbReference>
<dbReference type="Gene3D" id="2.40.30.10">
    <property type="entry name" value="Translation factors"/>
    <property type="match status" value="2"/>
</dbReference>
<dbReference type="HAMAP" id="MF_00118_B">
    <property type="entry name" value="EF_Tu_B"/>
    <property type="match status" value="1"/>
</dbReference>
<dbReference type="InterPro" id="IPR041709">
    <property type="entry name" value="EF-Tu_GTP-bd"/>
</dbReference>
<dbReference type="InterPro" id="IPR050055">
    <property type="entry name" value="EF-Tu_GTPase"/>
</dbReference>
<dbReference type="InterPro" id="IPR004161">
    <property type="entry name" value="EFTu-like_2"/>
</dbReference>
<dbReference type="InterPro" id="IPR033720">
    <property type="entry name" value="EFTU_2"/>
</dbReference>
<dbReference type="InterPro" id="IPR027417">
    <property type="entry name" value="P-loop_NTPase"/>
</dbReference>
<dbReference type="InterPro" id="IPR005225">
    <property type="entry name" value="Small_GTP-bd"/>
</dbReference>
<dbReference type="InterPro" id="IPR000795">
    <property type="entry name" value="T_Tr_GTP-bd_dom"/>
</dbReference>
<dbReference type="InterPro" id="IPR009000">
    <property type="entry name" value="Transl_B-barrel_sf"/>
</dbReference>
<dbReference type="InterPro" id="IPR009001">
    <property type="entry name" value="Transl_elong_EF1A/Init_IF2_C"/>
</dbReference>
<dbReference type="InterPro" id="IPR004541">
    <property type="entry name" value="Transl_elong_EFTu/EF1A_bac/org"/>
</dbReference>
<dbReference type="InterPro" id="IPR004160">
    <property type="entry name" value="Transl_elong_EFTu/EF1A_C"/>
</dbReference>
<dbReference type="NCBIfam" id="TIGR00485">
    <property type="entry name" value="EF-Tu"/>
    <property type="match status" value="1"/>
</dbReference>
<dbReference type="NCBIfam" id="NF000766">
    <property type="entry name" value="PRK00049.1"/>
    <property type="match status" value="1"/>
</dbReference>
<dbReference type="NCBIfam" id="NF009372">
    <property type="entry name" value="PRK12735.1"/>
    <property type="match status" value="1"/>
</dbReference>
<dbReference type="NCBIfam" id="NF009373">
    <property type="entry name" value="PRK12736.1"/>
    <property type="match status" value="1"/>
</dbReference>
<dbReference type="NCBIfam" id="TIGR00231">
    <property type="entry name" value="small_GTP"/>
    <property type="match status" value="1"/>
</dbReference>
<dbReference type="PANTHER" id="PTHR43721:SF22">
    <property type="entry name" value="ELONGATION FACTOR TU, MITOCHONDRIAL"/>
    <property type="match status" value="1"/>
</dbReference>
<dbReference type="PANTHER" id="PTHR43721">
    <property type="entry name" value="ELONGATION FACTOR TU-RELATED"/>
    <property type="match status" value="1"/>
</dbReference>
<dbReference type="Pfam" id="PF00009">
    <property type="entry name" value="GTP_EFTU"/>
    <property type="match status" value="1"/>
</dbReference>
<dbReference type="Pfam" id="PF03144">
    <property type="entry name" value="GTP_EFTU_D2"/>
    <property type="match status" value="1"/>
</dbReference>
<dbReference type="Pfam" id="PF03143">
    <property type="entry name" value="GTP_EFTU_D3"/>
    <property type="match status" value="1"/>
</dbReference>
<dbReference type="PRINTS" id="PR00315">
    <property type="entry name" value="ELONGATNFCT"/>
</dbReference>
<dbReference type="SUPFAM" id="SSF50465">
    <property type="entry name" value="EF-Tu/eEF-1alpha/eIF2-gamma C-terminal domain"/>
    <property type="match status" value="1"/>
</dbReference>
<dbReference type="SUPFAM" id="SSF52540">
    <property type="entry name" value="P-loop containing nucleoside triphosphate hydrolases"/>
    <property type="match status" value="1"/>
</dbReference>
<dbReference type="SUPFAM" id="SSF50447">
    <property type="entry name" value="Translation proteins"/>
    <property type="match status" value="1"/>
</dbReference>
<dbReference type="PROSITE" id="PS51722">
    <property type="entry name" value="G_TR_2"/>
    <property type="match status" value="1"/>
</dbReference>
<comment type="function">
    <text evidence="2">GTP hydrolase that promotes the GTP-dependent binding of aminoacyl-tRNA to the A-site of ribosomes during protein biosynthesis.</text>
</comment>
<comment type="catalytic activity">
    <reaction evidence="2">
        <text>GTP + H2O = GDP + phosphate + H(+)</text>
        <dbReference type="Rhea" id="RHEA:19669"/>
        <dbReference type="ChEBI" id="CHEBI:15377"/>
        <dbReference type="ChEBI" id="CHEBI:15378"/>
        <dbReference type="ChEBI" id="CHEBI:37565"/>
        <dbReference type="ChEBI" id="CHEBI:43474"/>
        <dbReference type="ChEBI" id="CHEBI:58189"/>
        <dbReference type="EC" id="3.6.5.3"/>
    </reaction>
    <physiologicalReaction direction="left-to-right" evidence="2">
        <dbReference type="Rhea" id="RHEA:19670"/>
    </physiologicalReaction>
</comment>
<comment type="subunit">
    <text evidence="2">Monomer.</text>
</comment>
<comment type="subcellular location">
    <subcellularLocation>
        <location evidence="2">Cytoplasm</location>
    </subcellularLocation>
</comment>
<comment type="similarity">
    <text evidence="2">Belongs to the TRAFAC class translation factor GTPase superfamily. Classic translation factor GTPase family. EF-Tu/EF-1A subfamily.</text>
</comment>
<proteinExistence type="inferred from homology"/>
<sequence>MAKDKFERTKPHVNVGTIGHIDHGKTTTTGAILAVQAAKGLAKAKGYSDIAKGGTVRDATKTVTIAVAHVEYESENRHYAHIDCPGHADFVKNMITGAAQMDGAILVVSAADGPMPQTKEHVLLGRQVGVPYIVVYLNKCDLVDDEELLELVELEVRELLSKYDYPGDDVPVVRGSSLPAYNNPSDPEASKCITELMEALDSHIPEPTREDDKPFLMAIEDVFSIEGRGTVATGRIERGVVKVGEEVEIIGLGPNSTKTTCTGVEMFRKEMNEGRSGDNVGCLLRGVKREDIQRGQVLAKPGSITPHTKFEAEVYCLSKDEGGRHTPFFSGYRPQFYFRTTDVTGTANLVGADMCMPGDNVKVEVELHKPIAMDDGVRFAIREGGRTVGSGVVTKILE</sequence>
<accession>Q7UMZ0</accession>
<feature type="chain" id="PRO_0000091372" description="Elongation factor Tu">
    <location>
        <begin position="1"/>
        <end position="398"/>
    </location>
</feature>
<feature type="domain" description="tr-type G">
    <location>
        <begin position="10"/>
        <end position="208"/>
    </location>
</feature>
<feature type="region of interest" description="G1" evidence="1">
    <location>
        <begin position="19"/>
        <end position="26"/>
    </location>
</feature>
<feature type="region of interest" description="G2" evidence="1">
    <location>
        <begin position="60"/>
        <end position="64"/>
    </location>
</feature>
<feature type="region of interest" description="G3" evidence="1">
    <location>
        <begin position="83"/>
        <end position="86"/>
    </location>
</feature>
<feature type="region of interest" description="G4" evidence="1">
    <location>
        <begin position="138"/>
        <end position="141"/>
    </location>
</feature>
<feature type="region of interest" description="G5" evidence="1">
    <location>
        <begin position="176"/>
        <end position="178"/>
    </location>
</feature>
<feature type="binding site" evidence="2">
    <location>
        <begin position="19"/>
        <end position="26"/>
    </location>
    <ligand>
        <name>GTP</name>
        <dbReference type="ChEBI" id="CHEBI:37565"/>
    </ligand>
</feature>
<feature type="binding site" evidence="2">
    <location>
        <position position="26"/>
    </location>
    <ligand>
        <name>Mg(2+)</name>
        <dbReference type="ChEBI" id="CHEBI:18420"/>
    </ligand>
</feature>
<feature type="binding site" evidence="2">
    <location>
        <begin position="83"/>
        <end position="87"/>
    </location>
    <ligand>
        <name>GTP</name>
        <dbReference type="ChEBI" id="CHEBI:37565"/>
    </ligand>
</feature>
<feature type="binding site" evidence="2">
    <location>
        <begin position="138"/>
        <end position="141"/>
    </location>
    <ligand>
        <name>GTP</name>
        <dbReference type="ChEBI" id="CHEBI:37565"/>
    </ligand>
</feature>